<evidence type="ECO:0000250" key="1">
    <source>
        <dbReference type="UniProtKB" id="Q6LZY8"/>
    </source>
</evidence>
<evidence type="ECO:0000250" key="2">
    <source>
        <dbReference type="UniProtKB" id="Q9Y256"/>
    </source>
</evidence>
<evidence type="ECO:0000255" key="3"/>
<evidence type="ECO:0000305" key="4"/>
<reference key="1">
    <citation type="journal article" date="2004" name="Genome Res.">
        <title>The status, quality, and expansion of the NIH full-length cDNA project: the Mammalian Gene Collection (MGC).</title>
        <authorList>
            <consortium name="The MGC Project Team"/>
        </authorList>
    </citation>
    <scope>NUCLEOTIDE SEQUENCE [LARGE SCALE MRNA]</scope>
    <source>
        <tissue>Brain</tissue>
    </source>
</reference>
<gene>
    <name type="primary">Rce1</name>
</gene>
<comment type="function">
    <text evidence="2">Protease involved in the processing of a variety of prenylated proteins containing the C-terminal CAAX motif, where C is a cysteine modified with an isoprenoid lipid, A is an aliphatic amino acid and X is any C-terminal amino acid. Proteolytically removes the C-terminal three residues of farnesylated and geranylated proteins, leaving the prenylated cysteine as the new C-terminus. Is able to process K-Ras, N-Ras, H-Ras, RAP1B and G-gamma-1 (By similarity).</text>
</comment>
<comment type="catalytic activity">
    <reaction evidence="2">
        <text>Hydrolyzes the peptide bond -P2-(S-farnesyl or geranylgeranyl)C-P1'-P2'-P3'-COOH where P1' and P2' are amino acids with aliphatic sidechains and P3' is any C-terminal residue.</text>
        <dbReference type="EC" id="3.4.26.1"/>
    </reaction>
</comment>
<comment type="activity regulation">
    <text evidence="2">Deubiquitination by USP17L2/USP17 negatively regulates the proteolytic activity toward Ras GTPases.</text>
</comment>
<comment type="subcellular location">
    <subcellularLocation>
        <location evidence="2">Endoplasmic reticulum membrane</location>
        <topology evidence="2">Multi-pass membrane protein</topology>
    </subcellularLocation>
</comment>
<comment type="PTM">
    <text evidence="2">Ubiquitinated. Undergoes 'Lys-48'- and 'Lys-63'-linked ubiquitination. 'Lys-48' ubiquitination induces its degradation. Deubiquitinated by USP17L2/USP17 that cleaves 'Lys-63'-linked ubiquitin chains (By similarity).</text>
</comment>
<comment type="similarity">
    <text evidence="4">Belongs to the peptidase U48 family.</text>
</comment>
<feature type="initiator methionine" description="Removed" evidence="2">
    <location>
        <position position="1"/>
    </location>
</feature>
<feature type="chain" id="PRO_0000356244" description="CAAX prenyl protease 2">
    <location>
        <begin position="2"/>
        <end position="308"/>
    </location>
</feature>
<feature type="transmembrane region" description="Helical" evidence="3">
    <location>
        <begin position="25"/>
        <end position="45"/>
    </location>
</feature>
<feature type="transmembrane region" description="Helical" evidence="3">
    <location>
        <begin position="75"/>
        <end position="95"/>
    </location>
</feature>
<feature type="transmembrane region" description="Helical" evidence="3">
    <location>
        <begin position="112"/>
        <end position="132"/>
    </location>
</feature>
<feature type="transmembrane region" description="Helical" evidence="3">
    <location>
        <begin position="186"/>
        <end position="206"/>
    </location>
</feature>
<feature type="transmembrane region" description="Helical" evidence="3">
    <location>
        <begin position="233"/>
        <end position="253"/>
    </location>
</feature>
<feature type="transmembrane region" description="Helical" evidence="3">
    <location>
        <begin position="262"/>
        <end position="282"/>
    </location>
</feature>
<feature type="active site" description="Proton donor/acceptor" evidence="1">
    <location>
        <position position="175"/>
    </location>
</feature>
<feature type="active site" description="Proton donor/acceptor" evidence="1">
    <location>
        <position position="208"/>
    </location>
</feature>
<feature type="site" description="Transition state stabilizer" evidence="1">
    <location>
        <position position="240"/>
    </location>
</feature>
<feature type="site" description="Transition state stabilizer" evidence="1">
    <location>
        <position position="244"/>
    </location>
</feature>
<feature type="modified residue" description="N-acetylalanine" evidence="2">
    <location>
        <position position="2"/>
    </location>
</feature>
<accession>B0BMW8</accession>
<sequence>MAALGGDGLRLLSVSRPERQPESAALSSPGPGLCCWVSVFSCFSLACSYVGSLYVWKSELPRDHPAVIKRRFTSVLVVSSLSPLCVLLWRELTGIQPGTSLLTLMGFRLEGIFPAALLPLLLTMILFLGPLMQLCMDCPCDLTDGLKVVLAPRSWARRLTDMRWLRNQVIAPLTEELVFRACMLPMLAPCTGLGPAVFTCPLFFGVAHFHHIIEQLRFRQSSVGSIFLSAGHLIGPVLCHSFCNYMGFPAVCAALEHPQKWPLLAGYALGVGLFLLLLQPLTDPKLYGSLPLCMLLERTGASETLLCS</sequence>
<keyword id="KW-0007">Acetylation</keyword>
<keyword id="KW-0256">Endoplasmic reticulum</keyword>
<keyword id="KW-0378">Hydrolase</keyword>
<keyword id="KW-0472">Membrane</keyword>
<keyword id="KW-0645">Protease</keyword>
<keyword id="KW-1185">Reference proteome</keyword>
<keyword id="KW-0812">Transmembrane</keyword>
<keyword id="KW-1133">Transmembrane helix</keyword>
<keyword id="KW-0832">Ubl conjugation</keyword>
<name>FACE2_RAT</name>
<organism>
    <name type="scientific">Rattus norvegicus</name>
    <name type="common">Rat</name>
    <dbReference type="NCBI Taxonomy" id="10116"/>
    <lineage>
        <taxon>Eukaryota</taxon>
        <taxon>Metazoa</taxon>
        <taxon>Chordata</taxon>
        <taxon>Craniata</taxon>
        <taxon>Vertebrata</taxon>
        <taxon>Euteleostomi</taxon>
        <taxon>Mammalia</taxon>
        <taxon>Eutheria</taxon>
        <taxon>Euarchontoglires</taxon>
        <taxon>Glires</taxon>
        <taxon>Rodentia</taxon>
        <taxon>Myomorpha</taxon>
        <taxon>Muroidea</taxon>
        <taxon>Muridae</taxon>
        <taxon>Murinae</taxon>
        <taxon>Rattus</taxon>
    </lineage>
</organism>
<protein>
    <recommendedName>
        <fullName>CAAX prenyl protease 2</fullName>
        <ecNumber evidence="2">3.4.26.1</ecNumber>
    </recommendedName>
    <alternativeName>
        <fullName>Farnesylated proteins-converting enzyme 2</fullName>
        <shortName>FACE-2</shortName>
    </alternativeName>
    <alternativeName>
        <fullName>Prenyl protein-specific endoprotease 2</fullName>
    </alternativeName>
    <alternativeName>
        <fullName>RCE1 homolog</fullName>
    </alternativeName>
</protein>
<proteinExistence type="evidence at transcript level"/>
<dbReference type="EC" id="3.4.26.1" evidence="2"/>
<dbReference type="EMBL" id="BC158593">
    <property type="protein sequence ID" value="AAI58594.1"/>
    <property type="molecule type" value="mRNA"/>
</dbReference>
<dbReference type="RefSeq" id="NP_001094055.1">
    <property type="nucleotide sequence ID" value="NM_001100585.1"/>
</dbReference>
<dbReference type="RefSeq" id="XP_006230852.1">
    <property type="nucleotide sequence ID" value="XM_006230790.5"/>
</dbReference>
<dbReference type="FunCoup" id="B0BMW8">
    <property type="interactions" value="2637"/>
</dbReference>
<dbReference type="STRING" id="10116.ENSRNOP00000026454"/>
<dbReference type="MEROPS" id="G05.002"/>
<dbReference type="PhosphoSitePlus" id="B0BMW8"/>
<dbReference type="PaxDb" id="10116-ENSRNOP00000026454"/>
<dbReference type="GeneID" id="309153"/>
<dbReference type="KEGG" id="rno:309153"/>
<dbReference type="UCSC" id="RGD:1309261">
    <property type="organism name" value="rat"/>
</dbReference>
<dbReference type="AGR" id="RGD:1309261"/>
<dbReference type="CTD" id="9986"/>
<dbReference type="RGD" id="1309261">
    <property type="gene designation" value="Rce1"/>
</dbReference>
<dbReference type="VEuPathDB" id="HostDB:ENSRNOG00000019468"/>
<dbReference type="eggNOG" id="KOG4130">
    <property type="taxonomic scope" value="Eukaryota"/>
</dbReference>
<dbReference type="InParanoid" id="B0BMW8"/>
<dbReference type="Reactome" id="R-RNO-5689880">
    <property type="pathway name" value="Ub-specific processing proteases"/>
</dbReference>
<dbReference type="Reactome" id="R-RNO-9648002">
    <property type="pathway name" value="RAS processing"/>
</dbReference>
<dbReference type="PRO" id="PR:B0BMW8"/>
<dbReference type="Proteomes" id="UP000002494">
    <property type="component" value="Chromosome 1"/>
</dbReference>
<dbReference type="Bgee" id="ENSRNOG00000019468">
    <property type="expression patterns" value="Expressed in pancreas and 20 other cell types or tissues"/>
</dbReference>
<dbReference type="ExpressionAtlas" id="B0BMW8">
    <property type="expression patterns" value="baseline and differential"/>
</dbReference>
<dbReference type="GO" id="GO:0005789">
    <property type="term" value="C:endoplasmic reticulum membrane"/>
    <property type="evidence" value="ECO:0000250"/>
    <property type="project" value="UniProtKB"/>
</dbReference>
<dbReference type="GO" id="GO:0004175">
    <property type="term" value="F:endopeptidase activity"/>
    <property type="evidence" value="ECO:0000250"/>
    <property type="project" value="UniProtKB"/>
</dbReference>
<dbReference type="GO" id="GO:0008238">
    <property type="term" value="F:exopeptidase activity"/>
    <property type="evidence" value="ECO:0000266"/>
    <property type="project" value="RGD"/>
</dbReference>
<dbReference type="GO" id="GO:0004222">
    <property type="term" value="F:metalloendopeptidase activity"/>
    <property type="evidence" value="ECO:0000318"/>
    <property type="project" value="GO_Central"/>
</dbReference>
<dbReference type="GO" id="GO:0080120">
    <property type="term" value="P:CAAX-box protein maturation"/>
    <property type="evidence" value="ECO:0000266"/>
    <property type="project" value="RGD"/>
</dbReference>
<dbReference type="GO" id="GO:0071586">
    <property type="term" value="P:CAAX-box protein processing"/>
    <property type="evidence" value="ECO:0000250"/>
    <property type="project" value="UniProtKB"/>
</dbReference>
<dbReference type="InterPro" id="IPR039731">
    <property type="entry name" value="Rce1"/>
</dbReference>
<dbReference type="InterPro" id="IPR003675">
    <property type="entry name" value="Rce1/LyrA-like_dom"/>
</dbReference>
<dbReference type="PANTHER" id="PTHR13046:SF0">
    <property type="entry name" value="CAAX PRENYL PROTEASE 2"/>
    <property type="match status" value="1"/>
</dbReference>
<dbReference type="PANTHER" id="PTHR13046">
    <property type="entry name" value="PROTEASE U48 CAAX PRENYL PROTEASE RCE1"/>
    <property type="match status" value="1"/>
</dbReference>
<dbReference type="Pfam" id="PF02517">
    <property type="entry name" value="Rce1-like"/>
    <property type="match status" value="1"/>
</dbReference>